<feature type="chain" id="PRO_0000158648" description="Membrane-spanning 4-domains subfamily A member 12">
    <location>
        <begin position="1"/>
        <end position="267"/>
    </location>
</feature>
<feature type="topological domain" description="Cytoplasmic" evidence="1">
    <location>
        <begin position="1"/>
        <end position="91"/>
    </location>
</feature>
<feature type="transmembrane region" description="Helical" evidence="1">
    <location>
        <begin position="92"/>
        <end position="112"/>
    </location>
</feature>
<feature type="topological domain" description="Extracellular" evidence="1">
    <location>
        <begin position="113"/>
        <end position="120"/>
    </location>
</feature>
<feature type="transmembrane region" description="Helical" evidence="1">
    <location>
        <begin position="121"/>
        <end position="141"/>
    </location>
</feature>
<feature type="topological domain" description="Cytoplasmic" evidence="1">
    <location>
        <begin position="142"/>
        <end position="160"/>
    </location>
</feature>
<feature type="transmembrane region" description="Helical" evidence="1">
    <location>
        <begin position="161"/>
        <end position="181"/>
    </location>
</feature>
<feature type="topological domain" description="Extracellular" evidence="1">
    <location>
        <begin position="182"/>
        <end position="200"/>
    </location>
</feature>
<feature type="transmembrane region" description="Helical" evidence="1">
    <location>
        <begin position="201"/>
        <end position="221"/>
    </location>
</feature>
<feature type="topological domain" description="Cytoplasmic" evidence="1">
    <location>
        <begin position="222"/>
        <end position="267"/>
    </location>
</feature>
<feature type="region of interest" description="Disordered" evidence="2">
    <location>
        <begin position="248"/>
        <end position="267"/>
    </location>
</feature>
<feature type="splice variant" id="VSP_044899" description="In isoform 2." evidence="3">
    <location>
        <begin position="93"/>
        <end position="138"/>
    </location>
</feature>
<feature type="sequence variant" id="VAR_057653" description="In dbSNP:rs12788393.">
    <original>A</original>
    <variation>D</variation>
    <location>
        <position position="10"/>
    </location>
</feature>
<feature type="sequence conflict" description="In Ref. 1; BAA91020." evidence="4" ref="1">
    <original>S</original>
    <variation>G</variation>
    <location>
        <position position="23"/>
    </location>
</feature>
<feature type="sequence conflict" description="In Ref. 4; BP262976." evidence="4" ref="4">
    <original>I</original>
    <variation>F</variation>
    <location>
        <position position="202"/>
    </location>
</feature>
<feature type="sequence conflict" description="In Ref. 4; BP262976." evidence="4" ref="4">
    <original>S</original>
    <variation>L</variation>
    <location>
        <position position="210"/>
    </location>
</feature>
<dbReference type="EMBL" id="AK000224">
    <property type="protein sequence ID" value="BAA91020.1"/>
    <property type="molecule type" value="mRNA"/>
</dbReference>
<dbReference type="EMBL" id="AP001034">
    <property type="status" value="NOT_ANNOTATED_CDS"/>
    <property type="molecule type" value="Genomic_DNA"/>
</dbReference>
<dbReference type="EMBL" id="BC029793">
    <property type="protein sequence ID" value="AAH29793.1"/>
    <property type="molecule type" value="mRNA"/>
</dbReference>
<dbReference type="EMBL" id="BP262976">
    <property type="status" value="NOT_ANNOTATED_CDS"/>
    <property type="molecule type" value="mRNA"/>
</dbReference>
<dbReference type="CCDS" id="CCDS53638.1">
    <molecule id="Q9NXJ0-2"/>
</dbReference>
<dbReference type="CCDS" id="CCDS7988.1">
    <molecule id="Q9NXJ0-1"/>
</dbReference>
<dbReference type="RefSeq" id="NP_001157942.1">
    <molecule id="Q9NXJ0-2"/>
    <property type="nucleotide sequence ID" value="NM_001164470.2"/>
</dbReference>
<dbReference type="RefSeq" id="NP_060186.2">
    <molecule id="Q9NXJ0-1"/>
    <property type="nucleotide sequence ID" value="NM_017716.3"/>
</dbReference>
<dbReference type="RefSeq" id="XP_011543419.1">
    <molecule id="Q9NXJ0-1"/>
    <property type="nucleotide sequence ID" value="XM_011545117.3"/>
</dbReference>
<dbReference type="SMR" id="Q9NXJ0"/>
<dbReference type="BioGRID" id="120210">
    <property type="interactions" value="10"/>
</dbReference>
<dbReference type="FunCoup" id="Q9NXJ0">
    <property type="interactions" value="63"/>
</dbReference>
<dbReference type="IntAct" id="Q9NXJ0">
    <property type="interactions" value="8"/>
</dbReference>
<dbReference type="STRING" id="9606.ENSP00000016913"/>
<dbReference type="GlyGen" id="Q9NXJ0">
    <property type="glycosylation" value="1 site"/>
</dbReference>
<dbReference type="iPTMnet" id="Q9NXJ0"/>
<dbReference type="PhosphoSitePlus" id="Q9NXJ0"/>
<dbReference type="BioMuta" id="MS4A12"/>
<dbReference type="DMDM" id="29611831"/>
<dbReference type="jPOST" id="Q9NXJ0"/>
<dbReference type="MassIVE" id="Q9NXJ0"/>
<dbReference type="PaxDb" id="9606-ENSP00000016913"/>
<dbReference type="PeptideAtlas" id="Q9NXJ0"/>
<dbReference type="ProteomicsDB" id="24356"/>
<dbReference type="ProteomicsDB" id="83104">
    <molecule id="Q9NXJ0-1"/>
</dbReference>
<dbReference type="Antibodypedia" id="27927">
    <property type="antibodies" value="141 antibodies from 20 providers"/>
</dbReference>
<dbReference type="DNASU" id="54860"/>
<dbReference type="Ensembl" id="ENST00000016913.8">
    <molecule id="Q9NXJ0-1"/>
    <property type="protein sequence ID" value="ENSP00000016913.4"/>
    <property type="gene ID" value="ENSG00000071203.9"/>
</dbReference>
<dbReference type="Ensembl" id="ENST00000537076.5">
    <molecule id="Q9NXJ0-2"/>
    <property type="protein sequence ID" value="ENSP00000440424.1"/>
    <property type="gene ID" value="ENSG00000071203.9"/>
</dbReference>
<dbReference type="GeneID" id="54860"/>
<dbReference type="KEGG" id="hsa:54860"/>
<dbReference type="MANE-Select" id="ENST00000016913.8">
    <property type="protein sequence ID" value="ENSP00000016913.4"/>
    <property type="RefSeq nucleotide sequence ID" value="NM_017716.3"/>
    <property type="RefSeq protein sequence ID" value="NP_060186.2"/>
</dbReference>
<dbReference type="UCSC" id="uc001npr.4">
    <molecule id="Q9NXJ0-1"/>
    <property type="organism name" value="human"/>
</dbReference>
<dbReference type="AGR" id="HGNC:13370"/>
<dbReference type="CTD" id="54860"/>
<dbReference type="DisGeNET" id="54860"/>
<dbReference type="GeneCards" id="MS4A12"/>
<dbReference type="HGNC" id="HGNC:13370">
    <property type="gene designation" value="MS4A12"/>
</dbReference>
<dbReference type="HPA" id="ENSG00000071203">
    <property type="expression patterns" value="Tissue enriched (intestine)"/>
</dbReference>
<dbReference type="MIM" id="606550">
    <property type="type" value="gene"/>
</dbReference>
<dbReference type="neXtProt" id="NX_Q9NXJ0"/>
<dbReference type="OpenTargets" id="ENSG00000071203"/>
<dbReference type="PharmGKB" id="PA134971353"/>
<dbReference type="VEuPathDB" id="HostDB:ENSG00000071203"/>
<dbReference type="eggNOG" id="ENOG502S2RH">
    <property type="taxonomic scope" value="Eukaryota"/>
</dbReference>
<dbReference type="GeneTree" id="ENSGT00940000162443"/>
<dbReference type="InParanoid" id="Q9NXJ0"/>
<dbReference type="OMA" id="APWLDNI"/>
<dbReference type="OrthoDB" id="10071849at2759"/>
<dbReference type="PAN-GO" id="Q9NXJ0">
    <property type="GO annotations" value="2 GO annotations based on evolutionary models"/>
</dbReference>
<dbReference type="PhylomeDB" id="Q9NXJ0"/>
<dbReference type="TreeFam" id="TF335157"/>
<dbReference type="PathwayCommons" id="Q9NXJ0"/>
<dbReference type="SignaLink" id="Q9NXJ0"/>
<dbReference type="BioGRID-ORCS" id="54860">
    <property type="hits" value="11 hits in 1147 CRISPR screens"/>
</dbReference>
<dbReference type="GenomeRNAi" id="54860"/>
<dbReference type="Pharos" id="Q9NXJ0">
    <property type="development level" value="Tdark"/>
</dbReference>
<dbReference type="PRO" id="PR:Q9NXJ0"/>
<dbReference type="Proteomes" id="UP000005640">
    <property type="component" value="Chromosome 11"/>
</dbReference>
<dbReference type="RNAct" id="Q9NXJ0">
    <property type="molecule type" value="protein"/>
</dbReference>
<dbReference type="Bgee" id="ENSG00000071203">
    <property type="expression patterns" value="Expressed in mucosa of transverse colon and 52 other cell types or tissues"/>
</dbReference>
<dbReference type="ExpressionAtlas" id="Q9NXJ0">
    <property type="expression patterns" value="baseline and differential"/>
</dbReference>
<dbReference type="GO" id="GO:0005886">
    <property type="term" value="C:plasma membrane"/>
    <property type="evidence" value="ECO:0000318"/>
    <property type="project" value="GO_Central"/>
</dbReference>
<dbReference type="GO" id="GO:0007166">
    <property type="term" value="P:cell surface receptor signaling pathway"/>
    <property type="evidence" value="ECO:0000318"/>
    <property type="project" value="GO_Central"/>
</dbReference>
<dbReference type="InterPro" id="IPR007237">
    <property type="entry name" value="CD20-like"/>
</dbReference>
<dbReference type="InterPro" id="IPR030417">
    <property type="entry name" value="MS4A"/>
</dbReference>
<dbReference type="PANTHER" id="PTHR23320:SF72">
    <property type="entry name" value="MEMBRANE-SPANNING 4-DOMAINS SUBFAMILY A MEMBER 12"/>
    <property type="match status" value="1"/>
</dbReference>
<dbReference type="PANTHER" id="PTHR23320">
    <property type="entry name" value="MEMBRANE-SPANNING 4-DOMAINS SUBFAMILY A MS4A -RELATED"/>
    <property type="match status" value="1"/>
</dbReference>
<dbReference type="Pfam" id="PF04103">
    <property type="entry name" value="CD20"/>
    <property type="match status" value="1"/>
</dbReference>
<evidence type="ECO:0000255" key="1"/>
<evidence type="ECO:0000256" key="2">
    <source>
        <dbReference type="SAM" id="MobiDB-lite"/>
    </source>
</evidence>
<evidence type="ECO:0000303" key="3">
    <source>
    </source>
</evidence>
<evidence type="ECO:0000305" key="4"/>
<keyword id="KW-0025">Alternative splicing</keyword>
<keyword id="KW-0472">Membrane</keyword>
<keyword id="KW-1267">Proteomics identification</keyword>
<keyword id="KW-0675">Receptor</keyword>
<keyword id="KW-1185">Reference proteome</keyword>
<keyword id="KW-0812">Transmembrane</keyword>
<keyword id="KW-1133">Transmembrane helix</keyword>
<reference key="1">
    <citation type="journal article" date="2004" name="Nat. Genet.">
        <title>Complete sequencing and characterization of 21,243 full-length human cDNAs.</title>
        <authorList>
            <person name="Ota T."/>
            <person name="Suzuki Y."/>
            <person name="Nishikawa T."/>
            <person name="Otsuki T."/>
            <person name="Sugiyama T."/>
            <person name="Irie R."/>
            <person name="Wakamatsu A."/>
            <person name="Hayashi K."/>
            <person name="Sato H."/>
            <person name="Nagai K."/>
            <person name="Kimura K."/>
            <person name="Makita H."/>
            <person name="Sekine M."/>
            <person name="Obayashi M."/>
            <person name="Nishi T."/>
            <person name="Shibahara T."/>
            <person name="Tanaka T."/>
            <person name="Ishii S."/>
            <person name="Yamamoto J."/>
            <person name="Saito K."/>
            <person name="Kawai Y."/>
            <person name="Isono Y."/>
            <person name="Nakamura Y."/>
            <person name="Nagahari K."/>
            <person name="Murakami K."/>
            <person name="Yasuda T."/>
            <person name="Iwayanagi T."/>
            <person name="Wagatsuma M."/>
            <person name="Shiratori A."/>
            <person name="Sudo H."/>
            <person name="Hosoiri T."/>
            <person name="Kaku Y."/>
            <person name="Kodaira H."/>
            <person name="Kondo H."/>
            <person name="Sugawara M."/>
            <person name="Takahashi M."/>
            <person name="Kanda K."/>
            <person name="Yokoi T."/>
            <person name="Furuya T."/>
            <person name="Kikkawa E."/>
            <person name="Omura Y."/>
            <person name="Abe K."/>
            <person name="Kamihara K."/>
            <person name="Katsuta N."/>
            <person name="Sato K."/>
            <person name="Tanikawa M."/>
            <person name="Yamazaki M."/>
            <person name="Ninomiya K."/>
            <person name="Ishibashi T."/>
            <person name="Yamashita H."/>
            <person name="Murakawa K."/>
            <person name="Fujimori K."/>
            <person name="Tanai H."/>
            <person name="Kimata M."/>
            <person name="Watanabe M."/>
            <person name="Hiraoka S."/>
            <person name="Chiba Y."/>
            <person name="Ishida S."/>
            <person name="Ono Y."/>
            <person name="Takiguchi S."/>
            <person name="Watanabe S."/>
            <person name="Yosida M."/>
            <person name="Hotuta T."/>
            <person name="Kusano J."/>
            <person name="Kanehori K."/>
            <person name="Takahashi-Fujii A."/>
            <person name="Hara H."/>
            <person name="Tanase T.-O."/>
            <person name="Nomura Y."/>
            <person name="Togiya S."/>
            <person name="Komai F."/>
            <person name="Hara R."/>
            <person name="Takeuchi K."/>
            <person name="Arita M."/>
            <person name="Imose N."/>
            <person name="Musashino K."/>
            <person name="Yuuki H."/>
            <person name="Oshima A."/>
            <person name="Sasaki N."/>
            <person name="Aotsuka S."/>
            <person name="Yoshikawa Y."/>
            <person name="Matsunawa H."/>
            <person name="Ichihara T."/>
            <person name="Shiohata N."/>
            <person name="Sano S."/>
            <person name="Moriya S."/>
            <person name="Momiyama H."/>
            <person name="Satoh N."/>
            <person name="Takami S."/>
            <person name="Terashima Y."/>
            <person name="Suzuki O."/>
            <person name="Nakagawa S."/>
            <person name="Senoh A."/>
            <person name="Mizoguchi H."/>
            <person name="Goto Y."/>
            <person name="Shimizu F."/>
            <person name="Wakebe H."/>
            <person name="Hishigaki H."/>
            <person name="Watanabe T."/>
            <person name="Sugiyama A."/>
            <person name="Takemoto M."/>
            <person name="Kawakami B."/>
            <person name="Yamazaki M."/>
            <person name="Watanabe K."/>
            <person name="Kumagai A."/>
            <person name="Itakura S."/>
            <person name="Fukuzumi Y."/>
            <person name="Fujimori Y."/>
            <person name="Komiyama M."/>
            <person name="Tashiro H."/>
            <person name="Tanigami A."/>
            <person name="Fujiwara T."/>
            <person name="Ono T."/>
            <person name="Yamada K."/>
            <person name="Fujii Y."/>
            <person name="Ozaki K."/>
            <person name="Hirao M."/>
            <person name="Ohmori Y."/>
            <person name="Kawabata A."/>
            <person name="Hikiji T."/>
            <person name="Kobatake N."/>
            <person name="Inagaki H."/>
            <person name="Ikema Y."/>
            <person name="Okamoto S."/>
            <person name="Okitani R."/>
            <person name="Kawakami T."/>
            <person name="Noguchi S."/>
            <person name="Itoh T."/>
            <person name="Shigeta K."/>
            <person name="Senba T."/>
            <person name="Matsumura K."/>
            <person name="Nakajima Y."/>
            <person name="Mizuno T."/>
            <person name="Morinaga M."/>
            <person name="Sasaki M."/>
            <person name="Togashi T."/>
            <person name="Oyama M."/>
            <person name="Hata H."/>
            <person name="Watanabe M."/>
            <person name="Komatsu T."/>
            <person name="Mizushima-Sugano J."/>
            <person name="Satoh T."/>
            <person name="Shirai Y."/>
            <person name="Takahashi Y."/>
            <person name="Nakagawa K."/>
            <person name="Okumura K."/>
            <person name="Nagase T."/>
            <person name="Nomura N."/>
            <person name="Kikuchi H."/>
            <person name="Masuho Y."/>
            <person name="Yamashita R."/>
            <person name="Nakai K."/>
            <person name="Yada T."/>
            <person name="Nakamura Y."/>
            <person name="Ohara O."/>
            <person name="Isogai T."/>
            <person name="Sugano S."/>
        </authorList>
    </citation>
    <scope>NUCLEOTIDE SEQUENCE [LARGE SCALE MRNA] (ISOFORM 1)</scope>
    <source>
        <tissue>Colon mucosa</tissue>
    </source>
</reference>
<reference key="2">
    <citation type="journal article" date="2006" name="Nature">
        <title>Human chromosome 11 DNA sequence and analysis including novel gene identification.</title>
        <authorList>
            <person name="Taylor T.D."/>
            <person name="Noguchi H."/>
            <person name="Totoki Y."/>
            <person name="Toyoda A."/>
            <person name="Kuroki Y."/>
            <person name="Dewar K."/>
            <person name="Lloyd C."/>
            <person name="Itoh T."/>
            <person name="Takeda T."/>
            <person name="Kim D.-W."/>
            <person name="She X."/>
            <person name="Barlow K.F."/>
            <person name="Bloom T."/>
            <person name="Bruford E."/>
            <person name="Chang J.L."/>
            <person name="Cuomo C.A."/>
            <person name="Eichler E."/>
            <person name="FitzGerald M.G."/>
            <person name="Jaffe D.B."/>
            <person name="LaButti K."/>
            <person name="Nicol R."/>
            <person name="Park H.-S."/>
            <person name="Seaman C."/>
            <person name="Sougnez C."/>
            <person name="Yang X."/>
            <person name="Zimmer A.R."/>
            <person name="Zody M.C."/>
            <person name="Birren B.W."/>
            <person name="Nusbaum C."/>
            <person name="Fujiyama A."/>
            <person name="Hattori M."/>
            <person name="Rogers J."/>
            <person name="Lander E.S."/>
            <person name="Sakaki Y."/>
        </authorList>
    </citation>
    <scope>NUCLEOTIDE SEQUENCE [LARGE SCALE GENOMIC DNA]</scope>
</reference>
<reference key="3">
    <citation type="journal article" date="2004" name="Genome Res.">
        <title>The status, quality, and expansion of the NIH full-length cDNA project: the Mammalian Gene Collection (MGC).</title>
        <authorList>
            <consortium name="The MGC Project Team"/>
        </authorList>
    </citation>
    <scope>NUCLEOTIDE SEQUENCE [LARGE SCALE MRNA] (ISOFORM 1)</scope>
    <source>
        <tissue>Colon</tissue>
        <tissue>Kidney</tissue>
        <tissue>Stomach</tissue>
    </source>
</reference>
<reference key="4">
    <citation type="journal article" date="2006" name="Genome Res.">
        <title>Diversification of transcriptional modulation: large-scale identification and characterization of putative alternative promoters of human genes.</title>
        <authorList>
            <person name="Kimura K."/>
            <person name="Wakamatsu A."/>
            <person name="Suzuki Y."/>
            <person name="Ota T."/>
            <person name="Nishikawa T."/>
            <person name="Yamashita R."/>
            <person name="Yamamoto J."/>
            <person name="Sekine M."/>
            <person name="Tsuritani K."/>
            <person name="Wakaguri H."/>
            <person name="Ishii S."/>
            <person name="Sugiyama T."/>
            <person name="Saito K."/>
            <person name="Isono Y."/>
            <person name="Irie R."/>
            <person name="Kushida N."/>
            <person name="Yoneyama T."/>
            <person name="Otsuka R."/>
            <person name="Kanda K."/>
            <person name="Yokoi T."/>
            <person name="Kondo H."/>
            <person name="Wagatsuma M."/>
            <person name="Murakawa K."/>
            <person name="Ishida S."/>
            <person name="Ishibashi T."/>
            <person name="Takahashi-Fujii A."/>
            <person name="Tanase T."/>
            <person name="Nagai K."/>
            <person name="Kikuchi H."/>
            <person name="Nakai K."/>
            <person name="Isogai T."/>
            <person name="Sugano S."/>
        </authorList>
    </citation>
    <scope>NUCLEOTIDE SEQUENCE [LARGE SCALE MRNA] OF 1-219 (ISOFORM 2)</scope>
    <source>
        <tissue>Small intestine</tissue>
    </source>
</reference>
<organism>
    <name type="scientific">Homo sapiens</name>
    <name type="common">Human</name>
    <dbReference type="NCBI Taxonomy" id="9606"/>
    <lineage>
        <taxon>Eukaryota</taxon>
        <taxon>Metazoa</taxon>
        <taxon>Chordata</taxon>
        <taxon>Craniata</taxon>
        <taxon>Vertebrata</taxon>
        <taxon>Euteleostomi</taxon>
        <taxon>Mammalia</taxon>
        <taxon>Eutheria</taxon>
        <taxon>Euarchontoglires</taxon>
        <taxon>Primates</taxon>
        <taxon>Haplorrhini</taxon>
        <taxon>Catarrhini</taxon>
        <taxon>Hominidae</taxon>
        <taxon>Homo</taxon>
    </lineage>
</organism>
<gene>
    <name type="primary">MS4A12</name>
</gene>
<proteinExistence type="evidence at protein level"/>
<sequence>MMSSKPTSHAEVNETIPNPYPPSSFMAPGFQQPLGSINLENQAQGAQRAQPYGITSPGIFASSQPGQGNIQMINPSVGTAVMNFKEEAKALGVIQIMVGLMHIGFGIVLCLISFSFREVLGFASTAVIGGYPFWGGLSFIISGSLSVSASKELSRCLVKGSLGMNIVSSILAFIGVILLLVDMCINGVAGQDYWAVLSGKGISATLMIFSLLEFFVACATAHFANQANTTTNMSVLVIPNMYESNPVTPASSSAPPRCNNYSANAPK</sequence>
<accession>Q9NXJ0</accession>
<accession>F5GX98</accession>
<accession>Q8N6L4</accession>
<comment type="function">
    <text>May be involved in signal transduction as a component of a multimeric receptor complex.</text>
</comment>
<comment type="interaction">
    <interactant intactId="EBI-10227644">
        <id>Q9NXJ0</id>
    </interactant>
    <interactant intactId="EBI-10298603">
        <id>Q9BU27</id>
        <label>FAM3A</label>
    </interactant>
    <organismsDiffer>false</organismsDiffer>
    <experiments>3</experiments>
</comment>
<comment type="interaction">
    <interactant intactId="EBI-10227644">
        <id>Q9NXJ0</id>
    </interactant>
    <interactant intactId="EBI-750078">
        <id>Q13021</id>
        <label>MALL</label>
    </interactant>
    <organismsDiffer>false</organismsDiffer>
    <experiments>6</experiments>
</comment>
<comment type="interaction">
    <interactant intactId="EBI-10227644">
        <id>Q9NXJ0</id>
    </interactant>
    <interactant intactId="EBI-3919291">
        <id>Q9Y342</id>
        <label>PLLP</label>
    </interactant>
    <organismsDiffer>false</organismsDiffer>
    <experiments>6</experiments>
</comment>
<comment type="subcellular location">
    <subcellularLocation>
        <location>Membrane</location>
        <topology>Multi-pass membrane protein</topology>
    </subcellularLocation>
</comment>
<comment type="alternative products">
    <event type="alternative splicing"/>
    <isoform>
        <id>Q9NXJ0-1</id>
        <name>1</name>
        <sequence type="displayed"/>
    </isoform>
    <isoform>
        <id>Q9NXJ0-2</id>
        <name>2</name>
        <sequence type="described" ref="VSP_044899"/>
    </isoform>
</comment>
<comment type="similarity">
    <text evidence="4">Belongs to the MS4A family.</text>
</comment>
<protein>
    <recommendedName>
        <fullName>Membrane-spanning 4-domains subfamily A member 12</fullName>
    </recommendedName>
</protein>
<name>M4A12_HUMAN</name>